<comment type="function">
    <text evidence="1">May be required for microtubule anchoring at the centrosome. Required for ciliogenesis (By similarity).</text>
</comment>
<comment type="subcellular location">
    <subcellularLocation>
        <location evidence="1">Cytoplasm</location>
        <location evidence="1">Cytoskeleton</location>
        <location evidence="1">Microtubule organizing center</location>
        <location evidence="1">Centrosome</location>
    </subcellularLocation>
    <subcellularLocation>
        <location evidence="1">Cytoplasm</location>
        <location evidence="1">Cytoskeleton</location>
    </subcellularLocation>
    <subcellularLocation>
        <location evidence="1">Cell projection</location>
        <location evidence="1">Cilium membrane</location>
    </subcellularLocation>
</comment>
<comment type="similarity">
    <text evidence="2">Belongs to the BBS4 family.</text>
</comment>
<keyword id="KW-1003">Cell membrane</keyword>
<keyword id="KW-0966">Cell projection</keyword>
<keyword id="KW-0969">Cilium</keyword>
<keyword id="KW-0963">Cytoplasm</keyword>
<keyword id="KW-0206">Cytoskeleton</keyword>
<keyword id="KW-0472">Membrane</keyword>
<keyword id="KW-1185">Reference proteome</keyword>
<keyword id="KW-0677">Repeat</keyword>
<keyword id="KW-0802">TPR repeat</keyword>
<organism>
    <name type="scientific">Drosophila melanogaster</name>
    <name type="common">Fruit fly</name>
    <dbReference type="NCBI Taxonomy" id="7227"/>
    <lineage>
        <taxon>Eukaryota</taxon>
        <taxon>Metazoa</taxon>
        <taxon>Ecdysozoa</taxon>
        <taxon>Arthropoda</taxon>
        <taxon>Hexapoda</taxon>
        <taxon>Insecta</taxon>
        <taxon>Pterygota</taxon>
        <taxon>Neoptera</taxon>
        <taxon>Endopterygota</taxon>
        <taxon>Diptera</taxon>
        <taxon>Brachycera</taxon>
        <taxon>Muscomorpha</taxon>
        <taxon>Ephydroidea</taxon>
        <taxon>Drosophilidae</taxon>
        <taxon>Drosophila</taxon>
        <taxon>Sophophora</taxon>
    </lineage>
</organism>
<reference key="1">
    <citation type="journal article" date="2000" name="Science">
        <title>The genome sequence of Drosophila melanogaster.</title>
        <authorList>
            <person name="Adams M.D."/>
            <person name="Celniker S.E."/>
            <person name="Holt R.A."/>
            <person name="Evans C.A."/>
            <person name="Gocayne J.D."/>
            <person name="Amanatides P.G."/>
            <person name="Scherer S.E."/>
            <person name="Li P.W."/>
            <person name="Hoskins R.A."/>
            <person name="Galle R.F."/>
            <person name="George R.A."/>
            <person name="Lewis S.E."/>
            <person name="Richards S."/>
            <person name="Ashburner M."/>
            <person name="Henderson S.N."/>
            <person name="Sutton G.G."/>
            <person name="Wortman J.R."/>
            <person name="Yandell M.D."/>
            <person name="Zhang Q."/>
            <person name="Chen L.X."/>
            <person name="Brandon R.C."/>
            <person name="Rogers Y.-H.C."/>
            <person name="Blazej R.G."/>
            <person name="Champe M."/>
            <person name="Pfeiffer B.D."/>
            <person name="Wan K.H."/>
            <person name="Doyle C."/>
            <person name="Baxter E.G."/>
            <person name="Helt G."/>
            <person name="Nelson C.R."/>
            <person name="Miklos G.L.G."/>
            <person name="Abril J.F."/>
            <person name="Agbayani A."/>
            <person name="An H.-J."/>
            <person name="Andrews-Pfannkoch C."/>
            <person name="Baldwin D."/>
            <person name="Ballew R.M."/>
            <person name="Basu A."/>
            <person name="Baxendale J."/>
            <person name="Bayraktaroglu L."/>
            <person name="Beasley E.M."/>
            <person name="Beeson K.Y."/>
            <person name="Benos P.V."/>
            <person name="Berman B.P."/>
            <person name="Bhandari D."/>
            <person name="Bolshakov S."/>
            <person name="Borkova D."/>
            <person name="Botchan M.R."/>
            <person name="Bouck J."/>
            <person name="Brokstein P."/>
            <person name="Brottier P."/>
            <person name="Burtis K.C."/>
            <person name="Busam D.A."/>
            <person name="Butler H."/>
            <person name="Cadieu E."/>
            <person name="Center A."/>
            <person name="Chandra I."/>
            <person name="Cherry J.M."/>
            <person name="Cawley S."/>
            <person name="Dahlke C."/>
            <person name="Davenport L.B."/>
            <person name="Davies P."/>
            <person name="de Pablos B."/>
            <person name="Delcher A."/>
            <person name="Deng Z."/>
            <person name="Mays A.D."/>
            <person name="Dew I."/>
            <person name="Dietz S.M."/>
            <person name="Dodson K."/>
            <person name="Doup L.E."/>
            <person name="Downes M."/>
            <person name="Dugan-Rocha S."/>
            <person name="Dunkov B.C."/>
            <person name="Dunn P."/>
            <person name="Durbin K.J."/>
            <person name="Evangelista C.C."/>
            <person name="Ferraz C."/>
            <person name="Ferriera S."/>
            <person name="Fleischmann W."/>
            <person name="Fosler C."/>
            <person name="Gabrielian A.E."/>
            <person name="Garg N.S."/>
            <person name="Gelbart W.M."/>
            <person name="Glasser K."/>
            <person name="Glodek A."/>
            <person name="Gong F."/>
            <person name="Gorrell J.H."/>
            <person name="Gu Z."/>
            <person name="Guan P."/>
            <person name="Harris M."/>
            <person name="Harris N.L."/>
            <person name="Harvey D.A."/>
            <person name="Heiman T.J."/>
            <person name="Hernandez J.R."/>
            <person name="Houck J."/>
            <person name="Hostin D."/>
            <person name="Houston K.A."/>
            <person name="Howland T.J."/>
            <person name="Wei M.-H."/>
            <person name="Ibegwam C."/>
            <person name="Jalali M."/>
            <person name="Kalush F."/>
            <person name="Karpen G.H."/>
            <person name="Ke Z."/>
            <person name="Kennison J.A."/>
            <person name="Ketchum K.A."/>
            <person name="Kimmel B.E."/>
            <person name="Kodira C.D."/>
            <person name="Kraft C.L."/>
            <person name="Kravitz S."/>
            <person name="Kulp D."/>
            <person name="Lai Z."/>
            <person name="Lasko P."/>
            <person name="Lei Y."/>
            <person name="Levitsky A.A."/>
            <person name="Li J.H."/>
            <person name="Li Z."/>
            <person name="Liang Y."/>
            <person name="Lin X."/>
            <person name="Liu X."/>
            <person name="Mattei B."/>
            <person name="McIntosh T.C."/>
            <person name="McLeod M.P."/>
            <person name="McPherson D."/>
            <person name="Merkulov G."/>
            <person name="Milshina N.V."/>
            <person name="Mobarry C."/>
            <person name="Morris J."/>
            <person name="Moshrefi A."/>
            <person name="Mount S.M."/>
            <person name="Moy M."/>
            <person name="Murphy B."/>
            <person name="Murphy L."/>
            <person name="Muzny D.M."/>
            <person name="Nelson D.L."/>
            <person name="Nelson D.R."/>
            <person name="Nelson K.A."/>
            <person name="Nixon K."/>
            <person name="Nusskern D.R."/>
            <person name="Pacleb J.M."/>
            <person name="Palazzolo M."/>
            <person name="Pittman G.S."/>
            <person name="Pan S."/>
            <person name="Pollard J."/>
            <person name="Puri V."/>
            <person name="Reese M.G."/>
            <person name="Reinert K."/>
            <person name="Remington K."/>
            <person name="Saunders R.D.C."/>
            <person name="Scheeler F."/>
            <person name="Shen H."/>
            <person name="Shue B.C."/>
            <person name="Siden-Kiamos I."/>
            <person name="Simpson M."/>
            <person name="Skupski M.P."/>
            <person name="Smith T.J."/>
            <person name="Spier E."/>
            <person name="Spradling A.C."/>
            <person name="Stapleton M."/>
            <person name="Strong R."/>
            <person name="Sun E."/>
            <person name="Svirskas R."/>
            <person name="Tector C."/>
            <person name="Turner R."/>
            <person name="Venter E."/>
            <person name="Wang A.H."/>
            <person name="Wang X."/>
            <person name="Wang Z.-Y."/>
            <person name="Wassarman D.A."/>
            <person name="Weinstock G.M."/>
            <person name="Weissenbach J."/>
            <person name="Williams S.M."/>
            <person name="Woodage T."/>
            <person name="Worley K.C."/>
            <person name="Wu D."/>
            <person name="Yang S."/>
            <person name="Yao Q.A."/>
            <person name="Ye J."/>
            <person name="Yeh R.-F."/>
            <person name="Zaveri J.S."/>
            <person name="Zhan M."/>
            <person name="Zhang G."/>
            <person name="Zhao Q."/>
            <person name="Zheng L."/>
            <person name="Zheng X.H."/>
            <person name="Zhong F.N."/>
            <person name="Zhong W."/>
            <person name="Zhou X."/>
            <person name="Zhu S.C."/>
            <person name="Zhu X."/>
            <person name="Smith H.O."/>
            <person name="Gibbs R.A."/>
            <person name="Myers E.W."/>
            <person name="Rubin G.M."/>
            <person name="Venter J.C."/>
        </authorList>
    </citation>
    <scope>NUCLEOTIDE SEQUENCE [LARGE SCALE GENOMIC DNA]</scope>
    <source>
        <strain>Berkeley</strain>
    </source>
</reference>
<reference key="2">
    <citation type="journal article" date="2002" name="Genome Biol.">
        <title>Annotation of the Drosophila melanogaster euchromatic genome: a systematic review.</title>
        <authorList>
            <person name="Misra S."/>
            <person name="Crosby M.A."/>
            <person name="Mungall C.J."/>
            <person name="Matthews B.B."/>
            <person name="Campbell K.S."/>
            <person name="Hradecky P."/>
            <person name="Huang Y."/>
            <person name="Kaminker J.S."/>
            <person name="Millburn G.H."/>
            <person name="Prochnik S.E."/>
            <person name="Smith C.D."/>
            <person name="Tupy J.L."/>
            <person name="Whitfield E.J."/>
            <person name="Bayraktaroglu L."/>
            <person name="Berman B.P."/>
            <person name="Bettencourt B.R."/>
            <person name="Celniker S.E."/>
            <person name="de Grey A.D.N.J."/>
            <person name="Drysdale R.A."/>
            <person name="Harris N.L."/>
            <person name="Richter J."/>
            <person name="Russo S."/>
            <person name="Schroeder A.J."/>
            <person name="Shu S.Q."/>
            <person name="Stapleton M."/>
            <person name="Yamada C."/>
            <person name="Ashburner M."/>
            <person name="Gelbart W.M."/>
            <person name="Rubin G.M."/>
            <person name="Lewis S.E."/>
        </authorList>
    </citation>
    <scope>GENOME REANNOTATION</scope>
    <source>
        <strain>Berkeley</strain>
    </source>
</reference>
<gene>
    <name type="primary">BBS4</name>
    <name type="ORF">CG13232</name>
</gene>
<accession>A1Z8E9</accession>
<name>BBS4_DROME</name>
<sequence>MYEPGTEQINCNGRLIELPTLEVVRPAPKMPSDANIDWLLHIYFTRREFTRCRRLIERELNRHLNPEYLYFVQGLIDREEGNHIEALRHLQKSAELNPRNIETYKEIGRTLYIMGRFSQALGVFREAEQRSSRQDHEIYHYLGELLYRAATTQSQKDVASQQQDEARTYFELAVQSGRKLESYVRLAELYRKDKQYQKAIEILENCLHLTPENSEVLIEISVLYLKINETQKAHDRLAEVVSIERKCSPKGLLAFGAILQSRNDIDGALSKYSQIANAEPEIAELWNNIGLCFFKKQKFIVAISSLRKSVWLSPLNYNALYNLSLIYIASEQYASAFHTLAAAINLRKDNAECYMLLGLCLRKLDDMENAFVALERASSMATGQQGAGRNPLVVLNFALFCYETGRLALSTEQYNRFMSQAQDLLLPTEYKFQATKLKSLLRISNQGNGILLDSADMGESDLGHNRATELLPDELPLEVNAVVSQN</sequence>
<dbReference type="EMBL" id="AE013599">
    <property type="protein sequence ID" value="AAF58718.1"/>
    <property type="molecule type" value="Genomic_DNA"/>
</dbReference>
<dbReference type="RefSeq" id="NP_610636.1">
    <property type="nucleotide sequence ID" value="NM_136792.2"/>
</dbReference>
<dbReference type="SMR" id="A1Z8E9"/>
<dbReference type="ComplexPortal" id="CPX-2747">
    <property type="entry name" value="BBSome complex"/>
</dbReference>
<dbReference type="FunCoup" id="A1Z8E9">
    <property type="interactions" value="194"/>
</dbReference>
<dbReference type="STRING" id="7227.FBpp0087297"/>
<dbReference type="PaxDb" id="7227-FBpp0087297"/>
<dbReference type="EnsemblMetazoa" id="FBtr0088202">
    <property type="protein sequence ID" value="FBpp0087297"/>
    <property type="gene ID" value="FBgn0033578"/>
</dbReference>
<dbReference type="GeneID" id="36167"/>
<dbReference type="KEGG" id="dme:Dmel_CG13232"/>
<dbReference type="AGR" id="FB:FBgn0033578"/>
<dbReference type="CTD" id="585"/>
<dbReference type="FlyBase" id="FBgn0033578">
    <property type="gene designation" value="BBS4"/>
</dbReference>
<dbReference type="VEuPathDB" id="VectorBase:FBgn0033578"/>
<dbReference type="eggNOG" id="KOG1124">
    <property type="taxonomic scope" value="Eukaryota"/>
</dbReference>
<dbReference type="GeneTree" id="ENSGT00940000173860"/>
<dbReference type="HOGENOM" id="CLU_033477_0_1_1"/>
<dbReference type="InParanoid" id="A1Z8E9"/>
<dbReference type="OMA" id="YCEVAWH"/>
<dbReference type="OrthoDB" id="309339at2759"/>
<dbReference type="PhylomeDB" id="A1Z8E9"/>
<dbReference type="BioGRID-ORCS" id="36167">
    <property type="hits" value="0 hits in 1 CRISPR screen"/>
</dbReference>
<dbReference type="GenomeRNAi" id="36167"/>
<dbReference type="PRO" id="PR:A1Z8E9"/>
<dbReference type="Proteomes" id="UP000000803">
    <property type="component" value="Chromosome 2R"/>
</dbReference>
<dbReference type="Bgee" id="FBgn0033578">
    <property type="expression patterns" value="Expressed in adult olfactory receptor neuron Or47b (Drosophila) in antenna and 32 other cell types or tissues"/>
</dbReference>
<dbReference type="ExpressionAtlas" id="A1Z8E9">
    <property type="expression patterns" value="baseline and differential"/>
</dbReference>
<dbReference type="GO" id="GO:0034464">
    <property type="term" value="C:BBSome"/>
    <property type="evidence" value="ECO:0000250"/>
    <property type="project" value="FlyBase"/>
</dbReference>
<dbReference type="GO" id="GO:0036064">
    <property type="term" value="C:ciliary basal body"/>
    <property type="evidence" value="ECO:0000318"/>
    <property type="project" value="GO_Central"/>
</dbReference>
<dbReference type="GO" id="GO:0060170">
    <property type="term" value="C:ciliary membrane"/>
    <property type="evidence" value="ECO:0007669"/>
    <property type="project" value="UniProtKB-SubCell"/>
</dbReference>
<dbReference type="GO" id="GO:0005929">
    <property type="term" value="C:cilium"/>
    <property type="evidence" value="ECO:0000250"/>
    <property type="project" value="FlyBase"/>
</dbReference>
<dbReference type="GO" id="GO:0005737">
    <property type="term" value="C:cytoplasm"/>
    <property type="evidence" value="ECO:0007669"/>
    <property type="project" value="UniProtKB-KW"/>
</dbReference>
<dbReference type="GO" id="GO:0000242">
    <property type="term" value="C:pericentriolar material"/>
    <property type="evidence" value="ECO:0000250"/>
    <property type="project" value="UniProtKB"/>
</dbReference>
<dbReference type="GO" id="GO:0034452">
    <property type="term" value="F:dynactin binding"/>
    <property type="evidence" value="ECO:0000250"/>
    <property type="project" value="FlyBase"/>
</dbReference>
<dbReference type="GO" id="GO:0030674">
    <property type="term" value="F:protein-macromolecule adaptor activity"/>
    <property type="evidence" value="ECO:0000250"/>
    <property type="project" value="UniProtKB"/>
</dbReference>
<dbReference type="GO" id="GO:0007098">
    <property type="term" value="P:centrosome cycle"/>
    <property type="evidence" value="ECO:0000250"/>
    <property type="project" value="UniProtKB"/>
</dbReference>
<dbReference type="GO" id="GO:0060271">
    <property type="term" value="P:cilium assembly"/>
    <property type="evidence" value="ECO:0000270"/>
    <property type="project" value="FlyBase"/>
</dbReference>
<dbReference type="GO" id="GO:0061512">
    <property type="term" value="P:protein localization to cilium"/>
    <property type="evidence" value="ECO:0000318"/>
    <property type="project" value="GO_Central"/>
</dbReference>
<dbReference type="FunFam" id="1.25.40.10:FF:000829">
    <property type="entry name" value="Bardet-Biedl syndrome 4 protein homolog"/>
    <property type="match status" value="1"/>
</dbReference>
<dbReference type="FunFam" id="1.25.40.10:FF:000918">
    <property type="entry name" value="Bardet-Biedl syndrome 4, isoform B"/>
    <property type="match status" value="1"/>
</dbReference>
<dbReference type="Gene3D" id="1.25.40.10">
    <property type="entry name" value="Tetratricopeptide repeat domain"/>
    <property type="match status" value="2"/>
</dbReference>
<dbReference type="InterPro" id="IPR011990">
    <property type="entry name" value="TPR-like_helical_dom_sf"/>
</dbReference>
<dbReference type="InterPro" id="IPR019734">
    <property type="entry name" value="TPR_rpt"/>
</dbReference>
<dbReference type="PANTHER" id="PTHR44186">
    <property type="match status" value="1"/>
</dbReference>
<dbReference type="PANTHER" id="PTHR44186:SF1">
    <property type="entry name" value="BARDET-BIEDL SYNDROME 4 PROTEIN"/>
    <property type="match status" value="1"/>
</dbReference>
<dbReference type="Pfam" id="PF12895">
    <property type="entry name" value="ANAPC3"/>
    <property type="match status" value="1"/>
</dbReference>
<dbReference type="Pfam" id="PF14559">
    <property type="entry name" value="TPR_19"/>
    <property type="match status" value="1"/>
</dbReference>
<dbReference type="SMART" id="SM00028">
    <property type="entry name" value="TPR"/>
    <property type="match status" value="7"/>
</dbReference>
<dbReference type="SUPFAM" id="SSF48452">
    <property type="entry name" value="TPR-like"/>
    <property type="match status" value="2"/>
</dbReference>
<dbReference type="PROSITE" id="PS50005">
    <property type="entry name" value="TPR"/>
    <property type="match status" value="8"/>
</dbReference>
<dbReference type="PROSITE" id="PS50293">
    <property type="entry name" value="TPR_REGION"/>
    <property type="match status" value="1"/>
</dbReference>
<feature type="chain" id="PRO_0000284045" description="BBSome complex member BBS4 homolog">
    <location>
        <begin position="1"/>
        <end position="486"/>
    </location>
</feature>
<feature type="repeat" description="TPR 1">
    <location>
        <begin position="33"/>
        <end position="66"/>
    </location>
</feature>
<feature type="repeat" description="TPR 2">
    <location>
        <begin position="67"/>
        <end position="100"/>
    </location>
</feature>
<feature type="repeat" description="TPR 3">
    <location>
        <begin position="101"/>
        <end position="134"/>
    </location>
</feature>
<feature type="repeat" description="TPR 4">
    <location>
        <begin position="143"/>
        <end position="179"/>
    </location>
</feature>
<feature type="repeat" description="TPR 5">
    <location>
        <begin position="180"/>
        <end position="213"/>
    </location>
</feature>
<feature type="repeat" description="TPR 6">
    <location>
        <begin position="215"/>
        <end position="247"/>
    </location>
</feature>
<feature type="repeat" description="TPR 7">
    <location>
        <begin position="249"/>
        <end position="282"/>
    </location>
</feature>
<feature type="repeat" description="TPR 8">
    <location>
        <begin position="283"/>
        <end position="316"/>
    </location>
</feature>
<feature type="repeat" description="TPR 9">
    <location>
        <begin position="318"/>
        <end position="350"/>
    </location>
</feature>
<feature type="repeat" description="TPR 10">
    <location>
        <begin position="352"/>
        <end position="384"/>
    </location>
</feature>
<proteinExistence type="inferred from homology"/>
<protein>
    <recommendedName>
        <fullName evidence="2">BBSome complex member BBS4 homolog</fullName>
    </recommendedName>
    <alternativeName>
        <fullName>Bardet-Biedl syndrome 4 protein homolog</fullName>
    </alternativeName>
</protein>
<evidence type="ECO:0000250" key="1"/>
<evidence type="ECO:0000305" key="2"/>